<name>COAD_XANOR</name>
<feature type="chain" id="PRO_1000011279" description="Phosphopantetheine adenylyltransferase">
    <location>
        <begin position="1"/>
        <end position="168"/>
    </location>
</feature>
<feature type="binding site" evidence="1">
    <location>
        <begin position="14"/>
        <end position="15"/>
    </location>
    <ligand>
        <name>ATP</name>
        <dbReference type="ChEBI" id="CHEBI:30616"/>
    </ligand>
</feature>
<feature type="binding site" evidence="1">
    <location>
        <position position="14"/>
    </location>
    <ligand>
        <name>substrate</name>
    </ligand>
</feature>
<feature type="binding site" evidence="1">
    <location>
        <position position="22"/>
    </location>
    <ligand>
        <name>ATP</name>
        <dbReference type="ChEBI" id="CHEBI:30616"/>
    </ligand>
</feature>
<feature type="binding site" evidence="1">
    <location>
        <position position="46"/>
    </location>
    <ligand>
        <name>substrate</name>
    </ligand>
</feature>
<feature type="binding site" evidence="1">
    <location>
        <position position="78"/>
    </location>
    <ligand>
        <name>substrate</name>
    </ligand>
</feature>
<feature type="binding site" evidence="1">
    <location>
        <position position="92"/>
    </location>
    <ligand>
        <name>substrate</name>
    </ligand>
</feature>
<feature type="binding site" evidence="1">
    <location>
        <begin position="93"/>
        <end position="95"/>
    </location>
    <ligand>
        <name>ATP</name>
        <dbReference type="ChEBI" id="CHEBI:30616"/>
    </ligand>
</feature>
<feature type="binding site" evidence="1">
    <location>
        <position position="103"/>
    </location>
    <ligand>
        <name>ATP</name>
        <dbReference type="ChEBI" id="CHEBI:30616"/>
    </ligand>
</feature>
<feature type="binding site" evidence="1">
    <location>
        <begin position="128"/>
        <end position="134"/>
    </location>
    <ligand>
        <name>ATP</name>
        <dbReference type="ChEBI" id="CHEBI:30616"/>
    </ligand>
</feature>
<feature type="site" description="Transition state stabilizer" evidence="1">
    <location>
        <position position="22"/>
    </location>
</feature>
<evidence type="ECO:0000255" key="1">
    <source>
        <dbReference type="HAMAP-Rule" id="MF_00151"/>
    </source>
</evidence>
<keyword id="KW-0067">ATP-binding</keyword>
<keyword id="KW-0173">Coenzyme A biosynthesis</keyword>
<keyword id="KW-0963">Cytoplasm</keyword>
<keyword id="KW-0460">Magnesium</keyword>
<keyword id="KW-0547">Nucleotide-binding</keyword>
<keyword id="KW-0548">Nucleotidyltransferase</keyword>
<keyword id="KW-1185">Reference proteome</keyword>
<keyword id="KW-0808">Transferase</keyword>
<reference key="1">
    <citation type="journal article" date="2005" name="Nucleic Acids Res.">
        <title>The genome sequence of Xanthomonas oryzae pathovar oryzae KACC10331, the bacterial blight pathogen of rice.</title>
        <authorList>
            <person name="Lee B.-M."/>
            <person name="Park Y.-J."/>
            <person name="Park D.-S."/>
            <person name="Kang H.-W."/>
            <person name="Kim J.-G."/>
            <person name="Song E.-S."/>
            <person name="Park I.-C."/>
            <person name="Yoon U.-H."/>
            <person name="Hahn J.-H."/>
            <person name="Koo B.-S."/>
            <person name="Lee G.-B."/>
            <person name="Kim H."/>
            <person name="Park H.-S."/>
            <person name="Yoon K.-O."/>
            <person name="Kim J.-H."/>
            <person name="Jung C.-H."/>
            <person name="Koh N.-H."/>
            <person name="Seo J.-S."/>
            <person name="Go S.-J."/>
        </authorList>
    </citation>
    <scope>NUCLEOTIDE SEQUENCE [LARGE SCALE GENOMIC DNA]</scope>
    <source>
        <strain>KACC10331 / KXO85</strain>
    </source>
</reference>
<sequence>MSVANSRTAVYPGTFDPITNGHIDLVNRAAPLFERVVVGVAYSPSKGPALSLERRVALAQEALAAHANVEVRGFDTLLAHFVRQMGAGVLLRGLRAVSDFEYEFQMASMNRHLIPEVETLFLTPSEQYSFISSSLVREIARLGGDVSGFVPASVVEALRQVRESRAQA</sequence>
<dbReference type="EC" id="2.7.7.3" evidence="1"/>
<dbReference type="EMBL" id="AE013598">
    <property type="protein sequence ID" value="AAW75762.1"/>
    <property type="molecule type" value="Genomic_DNA"/>
</dbReference>
<dbReference type="SMR" id="Q5GZV9"/>
<dbReference type="STRING" id="291331.XOO2508"/>
<dbReference type="KEGG" id="xoo:XOO2508"/>
<dbReference type="HOGENOM" id="CLU_100149_0_1_6"/>
<dbReference type="UniPathway" id="UPA00241">
    <property type="reaction ID" value="UER00355"/>
</dbReference>
<dbReference type="Proteomes" id="UP000006735">
    <property type="component" value="Chromosome"/>
</dbReference>
<dbReference type="GO" id="GO:0005737">
    <property type="term" value="C:cytoplasm"/>
    <property type="evidence" value="ECO:0007669"/>
    <property type="project" value="UniProtKB-SubCell"/>
</dbReference>
<dbReference type="GO" id="GO:0005524">
    <property type="term" value="F:ATP binding"/>
    <property type="evidence" value="ECO:0007669"/>
    <property type="project" value="UniProtKB-KW"/>
</dbReference>
<dbReference type="GO" id="GO:0004595">
    <property type="term" value="F:pantetheine-phosphate adenylyltransferase activity"/>
    <property type="evidence" value="ECO:0007669"/>
    <property type="project" value="UniProtKB-UniRule"/>
</dbReference>
<dbReference type="GO" id="GO:0015937">
    <property type="term" value="P:coenzyme A biosynthetic process"/>
    <property type="evidence" value="ECO:0007669"/>
    <property type="project" value="UniProtKB-UniRule"/>
</dbReference>
<dbReference type="CDD" id="cd02163">
    <property type="entry name" value="PPAT"/>
    <property type="match status" value="1"/>
</dbReference>
<dbReference type="Gene3D" id="3.40.50.620">
    <property type="entry name" value="HUPs"/>
    <property type="match status" value="1"/>
</dbReference>
<dbReference type="HAMAP" id="MF_00151">
    <property type="entry name" value="PPAT_bact"/>
    <property type="match status" value="1"/>
</dbReference>
<dbReference type="InterPro" id="IPR004821">
    <property type="entry name" value="Cyt_trans-like"/>
</dbReference>
<dbReference type="InterPro" id="IPR001980">
    <property type="entry name" value="PPAT"/>
</dbReference>
<dbReference type="InterPro" id="IPR014729">
    <property type="entry name" value="Rossmann-like_a/b/a_fold"/>
</dbReference>
<dbReference type="NCBIfam" id="TIGR01510">
    <property type="entry name" value="coaD_prev_kdtB"/>
    <property type="match status" value="1"/>
</dbReference>
<dbReference type="NCBIfam" id="TIGR00125">
    <property type="entry name" value="cyt_tran_rel"/>
    <property type="match status" value="1"/>
</dbReference>
<dbReference type="PANTHER" id="PTHR21342">
    <property type="entry name" value="PHOSPHOPANTETHEINE ADENYLYLTRANSFERASE"/>
    <property type="match status" value="1"/>
</dbReference>
<dbReference type="PANTHER" id="PTHR21342:SF1">
    <property type="entry name" value="PHOSPHOPANTETHEINE ADENYLYLTRANSFERASE"/>
    <property type="match status" value="1"/>
</dbReference>
<dbReference type="Pfam" id="PF01467">
    <property type="entry name" value="CTP_transf_like"/>
    <property type="match status" value="1"/>
</dbReference>
<dbReference type="PRINTS" id="PR01020">
    <property type="entry name" value="LPSBIOSNTHSS"/>
</dbReference>
<dbReference type="SUPFAM" id="SSF52374">
    <property type="entry name" value="Nucleotidylyl transferase"/>
    <property type="match status" value="1"/>
</dbReference>
<protein>
    <recommendedName>
        <fullName evidence="1">Phosphopantetheine adenylyltransferase</fullName>
        <ecNumber evidence="1">2.7.7.3</ecNumber>
    </recommendedName>
    <alternativeName>
        <fullName evidence="1">Dephospho-CoA pyrophosphorylase</fullName>
    </alternativeName>
    <alternativeName>
        <fullName evidence="1">Pantetheine-phosphate adenylyltransferase</fullName>
        <shortName evidence="1">PPAT</shortName>
    </alternativeName>
</protein>
<gene>
    <name evidence="1" type="primary">coaD</name>
    <name type="ordered locus">XOO2508</name>
</gene>
<organism>
    <name type="scientific">Xanthomonas oryzae pv. oryzae (strain KACC10331 / KXO85)</name>
    <dbReference type="NCBI Taxonomy" id="291331"/>
    <lineage>
        <taxon>Bacteria</taxon>
        <taxon>Pseudomonadati</taxon>
        <taxon>Pseudomonadota</taxon>
        <taxon>Gammaproteobacteria</taxon>
        <taxon>Lysobacterales</taxon>
        <taxon>Lysobacteraceae</taxon>
        <taxon>Xanthomonas</taxon>
    </lineage>
</organism>
<comment type="function">
    <text evidence="1">Reversibly transfers an adenylyl group from ATP to 4'-phosphopantetheine, yielding dephospho-CoA (dPCoA) and pyrophosphate.</text>
</comment>
<comment type="catalytic activity">
    <reaction evidence="1">
        <text>(R)-4'-phosphopantetheine + ATP + H(+) = 3'-dephospho-CoA + diphosphate</text>
        <dbReference type="Rhea" id="RHEA:19801"/>
        <dbReference type="ChEBI" id="CHEBI:15378"/>
        <dbReference type="ChEBI" id="CHEBI:30616"/>
        <dbReference type="ChEBI" id="CHEBI:33019"/>
        <dbReference type="ChEBI" id="CHEBI:57328"/>
        <dbReference type="ChEBI" id="CHEBI:61723"/>
        <dbReference type="EC" id="2.7.7.3"/>
    </reaction>
</comment>
<comment type="cofactor">
    <cofactor evidence="1">
        <name>Mg(2+)</name>
        <dbReference type="ChEBI" id="CHEBI:18420"/>
    </cofactor>
</comment>
<comment type="pathway">
    <text evidence="1">Cofactor biosynthesis; coenzyme A biosynthesis; CoA from (R)-pantothenate: step 4/5.</text>
</comment>
<comment type="subunit">
    <text evidence="1">Homohexamer.</text>
</comment>
<comment type="subcellular location">
    <subcellularLocation>
        <location evidence="1">Cytoplasm</location>
    </subcellularLocation>
</comment>
<comment type="similarity">
    <text evidence="1">Belongs to the bacterial CoaD family.</text>
</comment>
<proteinExistence type="inferred from homology"/>
<accession>Q5GZV9</accession>